<evidence type="ECO:0000250" key="1"/>
<evidence type="ECO:0000250" key="2">
    <source>
        <dbReference type="UniProtKB" id="O70166"/>
    </source>
</evidence>
<evidence type="ECO:0000250" key="3">
    <source>
        <dbReference type="UniProtKB" id="Q9JHU6"/>
    </source>
</evidence>
<evidence type="ECO:0000255" key="4"/>
<evidence type="ECO:0000255" key="5">
    <source>
        <dbReference type="PROSITE-ProRule" id="PRU00998"/>
    </source>
</evidence>
<evidence type="ECO:0000256" key="6">
    <source>
        <dbReference type="SAM" id="MobiDB-lite"/>
    </source>
</evidence>
<evidence type="ECO:0000305" key="7"/>
<dbReference type="EMBL" id="BC134627">
    <property type="protein sequence ID" value="AAI34628.1"/>
    <property type="molecule type" value="mRNA"/>
</dbReference>
<dbReference type="RefSeq" id="NP_001077135.1">
    <property type="nucleotide sequence ID" value="NM_001083666.1"/>
</dbReference>
<dbReference type="SMR" id="A4IFK9"/>
<dbReference type="FunCoup" id="A4IFK9">
    <property type="interactions" value="585"/>
</dbReference>
<dbReference type="STRING" id="9913.ENSBTAP00000048555"/>
<dbReference type="PaxDb" id="9913-ENSBTAP00000048555"/>
<dbReference type="Ensembl" id="ENSBTAT00000057292.2">
    <property type="protein sequence ID" value="ENSBTAP00000048555.1"/>
    <property type="gene ID" value="ENSBTAG00000038974.3"/>
</dbReference>
<dbReference type="GeneID" id="511110"/>
<dbReference type="KEGG" id="bta:511110"/>
<dbReference type="CTD" id="50861"/>
<dbReference type="VEuPathDB" id="HostDB:ENSBTAG00000038974"/>
<dbReference type="VGNC" id="VGNC:35405">
    <property type="gene designation" value="STMN3"/>
</dbReference>
<dbReference type="eggNOG" id="KOG1280">
    <property type="taxonomic scope" value="Eukaryota"/>
</dbReference>
<dbReference type="GeneTree" id="ENSGT01030000234597"/>
<dbReference type="HOGENOM" id="CLU_102026_0_0_1"/>
<dbReference type="InParanoid" id="A4IFK9"/>
<dbReference type="OMA" id="MPTAYKE"/>
<dbReference type="OrthoDB" id="5986631at2759"/>
<dbReference type="TreeFam" id="TF326935"/>
<dbReference type="Proteomes" id="UP000009136">
    <property type="component" value="Chromosome 13"/>
</dbReference>
<dbReference type="Bgee" id="ENSBTAG00000038974">
    <property type="expression patterns" value="Expressed in Ammon's horn and 62 other cell types or tissues"/>
</dbReference>
<dbReference type="GO" id="GO:0005737">
    <property type="term" value="C:cytoplasm"/>
    <property type="evidence" value="ECO:0000318"/>
    <property type="project" value="GO_Central"/>
</dbReference>
<dbReference type="GO" id="GO:0005829">
    <property type="term" value="C:cytosol"/>
    <property type="evidence" value="ECO:0000250"/>
    <property type="project" value="UniProtKB"/>
</dbReference>
<dbReference type="GO" id="GO:0005794">
    <property type="term" value="C:Golgi apparatus"/>
    <property type="evidence" value="ECO:0007669"/>
    <property type="project" value="UniProtKB-SubCell"/>
</dbReference>
<dbReference type="GO" id="GO:0030426">
    <property type="term" value="C:growth cone"/>
    <property type="evidence" value="ECO:0007669"/>
    <property type="project" value="UniProtKB-SubCell"/>
</dbReference>
<dbReference type="GO" id="GO:0043005">
    <property type="term" value="C:neuron projection"/>
    <property type="evidence" value="ECO:0000318"/>
    <property type="project" value="GO_Central"/>
</dbReference>
<dbReference type="GO" id="GO:0015631">
    <property type="term" value="F:tubulin binding"/>
    <property type="evidence" value="ECO:0000318"/>
    <property type="project" value="GO_Central"/>
</dbReference>
<dbReference type="GO" id="GO:0007019">
    <property type="term" value="P:microtubule depolymerization"/>
    <property type="evidence" value="ECO:0000318"/>
    <property type="project" value="GO_Central"/>
</dbReference>
<dbReference type="GO" id="GO:0031175">
    <property type="term" value="P:neuron projection development"/>
    <property type="evidence" value="ECO:0000318"/>
    <property type="project" value="GO_Central"/>
</dbReference>
<dbReference type="GO" id="GO:0031110">
    <property type="term" value="P:regulation of microtubule polymerization or depolymerization"/>
    <property type="evidence" value="ECO:0000318"/>
    <property type="project" value="GO_Central"/>
</dbReference>
<dbReference type="Gene3D" id="6.10.280.30">
    <property type="match status" value="1"/>
</dbReference>
<dbReference type="InterPro" id="IPR030514">
    <property type="entry name" value="Stathmin_CS"/>
</dbReference>
<dbReference type="InterPro" id="IPR000956">
    <property type="entry name" value="Stathmin_fam"/>
</dbReference>
<dbReference type="InterPro" id="IPR036002">
    <property type="entry name" value="Stathmin_sf"/>
</dbReference>
<dbReference type="PANTHER" id="PTHR10104">
    <property type="entry name" value="STATHMIN"/>
    <property type="match status" value="1"/>
</dbReference>
<dbReference type="PANTHER" id="PTHR10104:SF17">
    <property type="entry name" value="STATHMIN-3"/>
    <property type="match status" value="1"/>
</dbReference>
<dbReference type="Pfam" id="PF00836">
    <property type="entry name" value="Stathmin"/>
    <property type="match status" value="1"/>
</dbReference>
<dbReference type="PIRSF" id="PIRSF002285">
    <property type="entry name" value="Stathmin"/>
    <property type="match status" value="1"/>
</dbReference>
<dbReference type="PRINTS" id="PR00345">
    <property type="entry name" value="STATHMIN"/>
</dbReference>
<dbReference type="SUPFAM" id="SSF101494">
    <property type="entry name" value="Stathmin"/>
    <property type="match status" value="1"/>
</dbReference>
<dbReference type="PROSITE" id="PS00563">
    <property type="entry name" value="STATHMIN_1"/>
    <property type="match status" value="1"/>
</dbReference>
<dbReference type="PROSITE" id="PS01041">
    <property type="entry name" value="STATHMIN_2"/>
    <property type="match status" value="1"/>
</dbReference>
<dbReference type="PROSITE" id="PS51663">
    <property type="entry name" value="STATHMIN_3"/>
    <property type="match status" value="1"/>
</dbReference>
<protein>
    <recommendedName>
        <fullName>Stathmin-3</fullName>
    </recommendedName>
</protein>
<reference key="1">
    <citation type="submission" date="2007-03" db="EMBL/GenBank/DDBJ databases">
        <authorList>
            <consortium name="NIH - Mammalian Gene Collection (MGC) project"/>
        </authorList>
    </citation>
    <scope>NUCLEOTIDE SEQUENCE [LARGE SCALE MRNA]</scope>
    <source>
        <strain>Hereford</strain>
        <tissue>Brain cortex</tissue>
    </source>
</reference>
<proteinExistence type="evidence at transcript level"/>
<gene>
    <name type="primary">STMN3</name>
</gene>
<keyword id="KW-0966">Cell projection</keyword>
<keyword id="KW-0175">Coiled coil</keyword>
<keyword id="KW-0963">Cytoplasm</keyword>
<keyword id="KW-0333">Golgi apparatus</keyword>
<keyword id="KW-0449">Lipoprotein</keyword>
<keyword id="KW-0564">Palmitate</keyword>
<keyword id="KW-0597">Phosphoprotein</keyword>
<keyword id="KW-1185">Reference proteome</keyword>
<sequence>MASTISAYKEKMKELSVLSLICSCFYSQPHPNTVYQYGDMEVKQLDKRASGQSFEVILKSPSDLSPESPMLSSPPKRKDTSLEELQKRLEAAEERRKTQEAQVLKQLAERREHEREVLHKALEENNNFSRLAEEKLNYKMELSKEIREAHLAALRERLREKELHAAEVRRNKEQREEMSG</sequence>
<organism>
    <name type="scientific">Bos taurus</name>
    <name type="common">Bovine</name>
    <dbReference type="NCBI Taxonomy" id="9913"/>
    <lineage>
        <taxon>Eukaryota</taxon>
        <taxon>Metazoa</taxon>
        <taxon>Chordata</taxon>
        <taxon>Craniata</taxon>
        <taxon>Vertebrata</taxon>
        <taxon>Euteleostomi</taxon>
        <taxon>Mammalia</taxon>
        <taxon>Eutheria</taxon>
        <taxon>Laurasiatheria</taxon>
        <taxon>Artiodactyla</taxon>
        <taxon>Ruminantia</taxon>
        <taxon>Pecora</taxon>
        <taxon>Bovidae</taxon>
        <taxon>Bovinae</taxon>
        <taxon>Bos</taxon>
    </lineage>
</organism>
<comment type="function">
    <text evidence="1">Exhibits microtubule-destabilizing activity, which is antagonized by STAT3.</text>
</comment>
<comment type="subunit">
    <text evidence="1 3">Interacts with STAT3. Interacts with CLU (secreted form); this interaction may act as an important modulator during neuronal differentiation (By similarity).</text>
</comment>
<comment type="subcellular location">
    <subcellularLocation>
        <location evidence="1">Golgi apparatus</location>
    </subcellularLocation>
    <subcellularLocation>
        <location evidence="1">Cell projection</location>
        <location evidence="1">Growth cone</location>
    </subcellularLocation>
    <subcellularLocation>
        <location evidence="1">Cell projection</location>
        <location evidence="1">Axon</location>
    </subcellularLocation>
    <subcellularLocation>
        <location evidence="3">Cytoplasm</location>
        <location evidence="3">Cytosol</location>
    </subcellularLocation>
</comment>
<comment type="PTM">
    <text evidence="1">N-terminal palmitoylation promotes specific anchoring to the cytosolic leaflet of Golgi membranes and subsequent vesicular trafficking along dendrites and axons. Neuronal Stathmins are substrates for palmitoyltransferases ZDHHC3, ZDHHC7 and ZDHHC15 (By similarity).</text>
</comment>
<comment type="similarity">
    <text evidence="7">Belongs to the stathmin family.</text>
</comment>
<name>STMN3_BOVIN</name>
<feature type="chain" id="PRO_0000294076" description="Stathmin-3">
    <location>
        <begin position="1"/>
        <end position="180"/>
    </location>
</feature>
<feature type="domain" description="SLD" evidence="5">
    <location>
        <begin position="38"/>
        <end position="180"/>
    </location>
</feature>
<feature type="region of interest" description="Disordered" evidence="6">
    <location>
        <begin position="58"/>
        <end position="82"/>
    </location>
</feature>
<feature type="coiled-coil region" evidence="4">
    <location>
        <begin position="76"/>
        <end position="179"/>
    </location>
</feature>
<feature type="compositionally biased region" description="Low complexity" evidence="6">
    <location>
        <begin position="60"/>
        <end position="74"/>
    </location>
</feature>
<feature type="modified residue" description="Phosphoserine" evidence="2">
    <location>
        <position position="50"/>
    </location>
</feature>
<feature type="modified residue" description="Phosphoserine" evidence="2">
    <location>
        <position position="60"/>
    </location>
</feature>
<feature type="modified residue" description="Phosphoserine" evidence="2">
    <location>
        <position position="65"/>
    </location>
</feature>
<feature type="modified residue" description="Phosphoserine" evidence="2">
    <location>
        <position position="68"/>
    </location>
</feature>
<feature type="modified residue" description="Phosphoserine" evidence="2">
    <location>
        <position position="72"/>
    </location>
</feature>
<feature type="modified residue" description="Phosphoserine" evidence="2">
    <location>
        <position position="73"/>
    </location>
</feature>
<feature type="modified residue" description="Phosphoserine" evidence="3">
    <location>
        <position position="81"/>
    </location>
</feature>
<feature type="lipid moiety-binding region" description="S-palmitoyl cysteine" evidence="1">
    <location>
        <position position="22"/>
    </location>
</feature>
<feature type="lipid moiety-binding region" description="S-palmitoyl cysteine" evidence="1">
    <location>
        <position position="24"/>
    </location>
</feature>
<accession>A4IFK9</accession>